<protein>
    <recommendedName>
        <fullName>Uncharacterized protein Mb1320</fullName>
    </recommendedName>
</protein>
<reference key="1">
    <citation type="journal article" date="2003" name="Proc. Natl. Acad. Sci. U.S.A.">
        <title>The complete genome sequence of Mycobacterium bovis.</title>
        <authorList>
            <person name="Garnier T."/>
            <person name="Eiglmeier K."/>
            <person name="Camus J.-C."/>
            <person name="Medina N."/>
            <person name="Mansoor H."/>
            <person name="Pryor M."/>
            <person name="Duthoy S."/>
            <person name="Grondin S."/>
            <person name="Lacroix C."/>
            <person name="Monsempe C."/>
            <person name="Simon S."/>
            <person name="Harris B."/>
            <person name="Atkin R."/>
            <person name="Doggett J."/>
            <person name="Mayes R."/>
            <person name="Keating L."/>
            <person name="Wheeler P.R."/>
            <person name="Parkhill J."/>
            <person name="Barrell B.G."/>
            <person name="Cole S.T."/>
            <person name="Gordon S.V."/>
            <person name="Hewinson R.G."/>
        </authorList>
    </citation>
    <scope>NUCLEOTIDE SEQUENCE [LARGE SCALE GENOMIC DNA]</scope>
    <source>
        <strain>ATCC BAA-935 / AF2122/97</strain>
    </source>
</reference>
<reference key="2">
    <citation type="journal article" date="2017" name="Genome Announc.">
        <title>Updated reference genome sequence and annotation of Mycobacterium bovis AF2122/97.</title>
        <authorList>
            <person name="Malone K.M."/>
            <person name="Farrell D."/>
            <person name="Stuber T.P."/>
            <person name="Schubert O.T."/>
            <person name="Aebersold R."/>
            <person name="Robbe-Austerman S."/>
            <person name="Gordon S.V."/>
        </authorList>
    </citation>
    <scope>NUCLEOTIDE SEQUENCE [LARGE SCALE GENOMIC DNA]</scope>
    <scope>GENOME REANNOTATION</scope>
    <source>
        <strain>ATCC BAA-935 / AF2122/97</strain>
    </source>
</reference>
<accession>P64800</accession>
<accession>A0A1R3XYV6</accession>
<accession>Q10615</accession>
<accession>X2BHA6</accession>
<name>Y1320_MYCBO</name>
<keyword id="KW-1185">Reference proteome</keyword>
<sequence length="210" mass="23550">MCVSVGESVAQSLQQWDRKLWDVAMLHACNAVDETGRKRYPTLGVGTRFRTALRDSLDIYGVMATPGVDLEKTRFPVGVRSDLLPDKRPDIADVLYGIHRWLHGHADESSVEFEVSPYVNASAALRIANDGKIQLPKSAILGLLAVAVFAPENKGEVIPPDYQLSWYDHVFFISVWWGWQDHFREIVNVDRASLVALDFGDLWNGWTPVG</sequence>
<gene>
    <name type="ordered locus">BQ2027_MB1320</name>
</gene>
<dbReference type="EMBL" id="LT708304">
    <property type="protein sequence ID" value="SIT99923.1"/>
    <property type="molecule type" value="Genomic_DNA"/>
</dbReference>
<dbReference type="RefSeq" id="NP_854974.1">
    <property type="nucleotide sequence ID" value="NC_002945.3"/>
</dbReference>
<dbReference type="RefSeq" id="WP_003406626.1">
    <property type="nucleotide sequence ID" value="NC_002945.4"/>
</dbReference>
<dbReference type="KEGG" id="mbo:BQ2027_MB1320"/>
<dbReference type="PATRIC" id="fig|233413.5.peg.1446"/>
<dbReference type="Proteomes" id="UP000001419">
    <property type="component" value="Chromosome"/>
</dbReference>
<organism>
    <name type="scientific">Mycobacterium bovis (strain ATCC BAA-935 / AF2122/97)</name>
    <dbReference type="NCBI Taxonomy" id="233413"/>
    <lineage>
        <taxon>Bacteria</taxon>
        <taxon>Bacillati</taxon>
        <taxon>Actinomycetota</taxon>
        <taxon>Actinomycetes</taxon>
        <taxon>Mycobacteriales</taxon>
        <taxon>Mycobacteriaceae</taxon>
        <taxon>Mycobacterium</taxon>
        <taxon>Mycobacterium tuberculosis complex</taxon>
    </lineage>
</organism>
<proteinExistence type="predicted"/>
<feature type="chain" id="PRO_0000103788" description="Uncharacterized protein Mb1320">
    <location>
        <begin position="1"/>
        <end position="210"/>
    </location>
</feature>